<proteinExistence type="inferred from homology"/>
<name>YQGF_ANADF</name>
<evidence type="ECO:0000255" key="1">
    <source>
        <dbReference type="HAMAP-Rule" id="MF_00651"/>
    </source>
</evidence>
<dbReference type="EC" id="3.1.-.-" evidence="1"/>
<dbReference type="EMBL" id="CP000769">
    <property type="protein sequence ID" value="ABS26736.1"/>
    <property type="molecule type" value="Genomic_DNA"/>
</dbReference>
<dbReference type="RefSeq" id="WP_012097330.1">
    <property type="nucleotide sequence ID" value="NC_009675.1"/>
</dbReference>
<dbReference type="SMR" id="A7HDE0"/>
<dbReference type="STRING" id="404589.Anae109_2535"/>
<dbReference type="KEGG" id="afw:Anae109_2535"/>
<dbReference type="eggNOG" id="COG0816">
    <property type="taxonomic scope" value="Bacteria"/>
</dbReference>
<dbReference type="HOGENOM" id="CLU_098240_3_0_7"/>
<dbReference type="OrthoDB" id="9796140at2"/>
<dbReference type="Proteomes" id="UP000006382">
    <property type="component" value="Chromosome"/>
</dbReference>
<dbReference type="GO" id="GO:0005829">
    <property type="term" value="C:cytosol"/>
    <property type="evidence" value="ECO:0007669"/>
    <property type="project" value="TreeGrafter"/>
</dbReference>
<dbReference type="GO" id="GO:0004518">
    <property type="term" value="F:nuclease activity"/>
    <property type="evidence" value="ECO:0007669"/>
    <property type="project" value="UniProtKB-KW"/>
</dbReference>
<dbReference type="GO" id="GO:0000967">
    <property type="term" value="P:rRNA 5'-end processing"/>
    <property type="evidence" value="ECO:0007669"/>
    <property type="project" value="UniProtKB-UniRule"/>
</dbReference>
<dbReference type="CDD" id="cd16964">
    <property type="entry name" value="YqgF"/>
    <property type="match status" value="1"/>
</dbReference>
<dbReference type="Gene3D" id="3.30.420.140">
    <property type="entry name" value="YqgF/RNase H-like domain"/>
    <property type="match status" value="1"/>
</dbReference>
<dbReference type="HAMAP" id="MF_00651">
    <property type="entry name" value="Nuclease_YqgF"/>
    <property type="match status" value="1"/>
</dbReference>
<dbReference type="InterPro" id="IPR012337">
    <property type="entry name" value="RNaseH-like_sf"/>
</dbReference>
<dbReference type="InterPro" id="IPR005227">
    <property type="entry name" value="YqgF"/>
</dbReference>
<dbReference type="InterPro" id="IPR006641">
    <property type="entry name" value="YqgF/RNaseH-like_dom"/>
</dbReference>
<dbReference type="InterPro" id="IPR037027">
    <property type="entry name" value="YqgF/RNaseH-like_dom_sf"/>
</dbReference>
<dbReference type="NCBIfam" id="TIGR00250">
    <property type="entry name" value="RNAse_H_YqgF"/>
    <property type="match status" value="1"/>
</dbReference>
<dbReference type="PANTHER" id="PTHR33317">
    <property type="entry name" value="POLYNUCLEOTIDYL TRANSFERASE, RIBONUCLEASE H-LIKE SUPERFAMILY PROTEIN"/>
    <property type="match status" value="1"/>
</dbReference>
<dbReference type="PANTHER" id="PTHR33317:SF4">
    <property type="entry name" value="POLYNUCLEOTIDYL TRANSFERASE, RIBONUCLEASE H-LIKE SUPERFAMILY PROTEIN"/>
    <property type="match status" value="1"/>
</dbReference>
<dbReference type="Pfam" id="PF03652">
    <property type="entry name" value="RuvX"/>
    <property type="match status" value="1"/>
</dbReference>
<dbReference type="SMART" id="SM00732">
    <property type="entry name" value="YqgFc"/>
    <property type="match status" value="1"/>
</dbReference>
<dbReference type="SUPFAM" id="SSF53098">
    <property type="entry name" value="Ribonuclease H-like"/>
    <property type="match status" value="1"/>
</dbReference>
<feature type="chain" id="PRO_1000061480" description="Putative pre-16S rRNA nuclease">
    <location>
        <begin position="1"/>
        <end position="137"/>
    </location>
</feature>
<comment type="function">
    <text evidence="1">Could be a nuclease involved in processing of the 5'-end of pre-16S rRNA.</text>
</comment>
<comment type="subcellular location">
    <subcellularLocation>
        <location evidence="1">Cytoplasm</location>
    </subcellularLocation>
</comment>
<comment type="similarity">
    <text evidence="1">Belongs to the YqgF nuclease family.</text>
</comment>
<sequence length="137" mass="14974">MRYLGLDLGRARIGLALADDVLRTARPLSVVRHRTREADLASIAATLREWEVGTAVVGLPLNMDGSEGASARYARAFAEELARATGVPVELFDERLSTFEAESRLREQGFSARELRGRVDAEAAAVILQGWLDGRHA</sequence>
<protein>
    <recommendedName>
        <fullName evidence="1">Putative pre-16S rRNA nuclease</fullName>
        <ecNumber evidence="1">3.1.-.-</ecNumber>
    </recommendedName>
</protein>
<organism>
    <name type="scientific">Anaeromyxobacter sp. (strain Fw109-5)</name>
    <dbReference type="NCBI Taxonomy" id="404589"/>
    <lineage>
        <taxon>Bacteria</taxon>
        <taxon>Pseudomonadati</taxon>
        <taxon>Myxococcota</taxon>
        <taxon>Myxococcia</taxon>
        <taxon>Myxococcales</taxon>
        <taxon>Cystobacterineae</taxon>
        <taxon>Anaeromyxobacteraceae</taxon>
        <taxon>Anaeromyxobacter</taxon>
    </lineage>
</organism>
<reference key="1">
    <citation type="journal article" date="2015" name="Genome Announc.">
        <title>Complete genome sequence of Anaeromyxobacter sp. Fw109-5, an anaerobic, metal-reducing bacterium isolated from a contaminated subsurface environment.</title>
        <authorList>
            <person name="Hwang C."/>
            <person name="Copeland A."/>
            <person name="Lucas S."/>
            <person name="Lapidus A."/>
            <person name="Barry K."/>
            <person name="Glavina Del Rio T."/>
            <person name="Dalin E."/>
            <person name="Tice H."/>
            <person name="Pitluck S."/>
            <person name="Sims D."/>
            <person name="Brettin T."/>
            <person name="Bruce D.C."/>
            <person name="Detter J.C."/>
            <person name="Han C.S."/>
            <person name="Schmutz J."/>
            <person name="Larimer F.W."/>
            <person name="Land M.L."/>
            <person name="Hauser L.J."/>
            <person name="Kyrpides N."/>
            <person name="Lykidis A."/>
            <person name="Richardson P."/>
            <person name="Belieav A."/>
            <person name="Sanford R.A."/>
            <person name="Loeffler F.E."/>
            <person name="Fields M.W."/>
        </authorList>
    </citation>
    <scope>NUCLEOTIDE SEQUENCE [LARGE SCALE GENOMIC DNA]</scope>
    <source>
        <strain>Fw109-5</strain>
    </source>
</reference>
<keyword id="KW-0963">Cytoplasm</keyword>
<keyword id="KW-0378">Hydrolase</keyword>
<keyword id="KW-0540">Nuclease</keyword>
<keyword id="KW-1185">Reference proteome</keyword>
<keyword id="KW-0690">Ribosome biogenesis</keyword>
<accession>A7HDE0</accession>
<gene>
    <name type="ordered locus">Anae109_2535</name>
</gene>